<reference key="1">
    <citation type="journal article" date="1995" name="Plant Mol. Biol. Rep.">
        <title>The chloroplast genome of a chlorophyll a+c-containing alga, Odontella sinensis.</title>
        <authorList>
            <person name="Kowallik K.V."/>
            <person name="Stoebe B."/>
            <person name="Schaffran I."/>
            <person name="Kroth-Pancic P."/>
            <person name="Freier U."/>
        </authorList>
    </citation>
    <scope>NUCLEOTIDE SEQUENCE [LARGE SCALE GENOMIC DNA]</scope>
</reference>
<name>RBCR_TRICV</name>
<proteinExistence type="inferred from homology"/>
<protein>
    <recommendedName>
        <fullName>Probable RuBisCO transcriptional regulator</fullName>
    </recommendedName>
</protein>
<feature type="chain" id="PRO_0000105772" description="Probable RuBisCO transcriptional regulator">
    <location>
        <begin position="1"/>
        <end position="309"/>
    </location>
</feature>
<feature type="domain" description="HTH lysR-type" evidence="2">
    <location>
        <begin position="5"/>
        <end position="62"/>
    </location>
</feature>
<feature type="DNA-binding region" description="H-T-H motif" evidence="2">
    <location>
        <begin position="22"/>
        <end position="41"/>
    </location>
</feature>
<comment type="function">
    <text evidence="1">Trans-acting transcriptional regulator of RuBisCO genes (rbcL and rbcS) expression.</text>
</comment>
<comment type="subcellular location">
    <subcellularLocation>
        <location>Plastid</location>
        <location>Chloroplast</location>
    </subcellularLocation>
</comment>
<comment type="similarity">
    <text evidence="3">Belongs to the LysR transcriptional regulatory family.</text>
</comment>
<sequence>MTLPFTLQQLRILKAIATEKSFTRAAEVLFVSQPSLSKQIKTLESRLNISLLNRENNIVSLTQAGKLFLEYSERILALCEESCRVLNDLKTGDRGNLIVGASQTIGTYLMPRVLALFAQNHPQINIEVHVDSTRKIAKRVLEGDIDIAVVGGNIPEEIEKNLKVEDFVNDELILIIPKSHPFALKKKKKINKDDLYHLNFITLNSNSTIRKLIDNILIQIAFEPKQFNIIMQLNSIEAIKTAVSLGLGAAFVSSSAIEKEIELKTIEIVTIEDIKITRILSIISNPECYRSKAVDLFYNELWTLKNTSN</sequence>
<gene>
    <name type="primary">rbcR</name>
    <name type="synonym">trsE</name>
    <name type="synonym">ycf30</name>
</gene>
<geneLocation type="chloroplast"/>
<keyword id="KW-0150">Chloroplast</keyword>
<keyword id="KW-0238">DNA-binding</keyword>
<keyword id="KW-0934">Plastid</keyword>
<keyword id="KW-0804">Transcription</keyword>
<keyword id="KW-0805">Transcription regulation</keyword>
<evidence type="ECO:0000250" key="1"/>
<evidence type="ECO:0000255" key="2">
    <source>
        <dbReference type="PROSITE-ProRule" id="PRU00253"/>
    </source>
</evidence>
<evidence type="ECO:0000305" key="3"/>
<accession>P49518</accession>
<dbReference type="EMBL" id="Z67753">
    <property type="protein sequence ID" value="CAA91664.1"/>
    <property type="molecule type" value="Genomic_DNA"/>
</dbReference>
<dbReference type="PIR" id="S78291">
    <property type="entry name" value="S78291"/>
</dbReference>
<dbReference type="RefSeq" id="NP_043632.1">
    <property type="nucleotide sequence ID" value="NC_001713.1"/>
</dbReference>
<dbReference type="SMR" id="P49518"/>
<dbReference type="GeneID" id="801828"/>
<dbReference type="GO" id="GO:0009507">
    <property type="term" value="C:chloroplast"/>
    <property type="evidence" value="ECO:0007669"/>
    <property type="project" value="UniProtKB-SubCell"/>
</dbReference>
<dbReference type="GO" id="GO:0003700">
    <property type="term" value="F:DNA-binding transcription factor activity"/>
    <property type="evidence" value="ECO:0007669"/>
    <property type="project" value="InterPro"/>
</dbReference>
<dbReference type="GO" id="GO:0000976">
    <property type="term" value="F:transcription cis-regulatory region binding"/>
    <property type="evidence" value="ECO:0007669"/>
    <property type="project" value="TreeGrafter"/>
</dbReference>
<dbReference type="CDD" id="cd08420">
    <property type="entry name" value="PBP2_CysL_like"/>
    <property type="match status" value="1"/>
</dbReference>
<dbReference type="FunFam" id="1.10.10.10:FF:000001">
    <property type="entry name" value="LysR family transcriptional regulator"/>
    <property type="match status" value="1"/>
</dbReference>
<dbReference type="Gene3D" id="3.40.190.290">
    <property type="match status" value="1"/>
</dbReference>
<dbReference type="Gene3D" id="1.10.10.10">
    <property type="entry name" value="Winged helix-like DNA-binding domain superfamily/Winged helix DNA-binding domain"/>
    <property type="match status" value="1"/>
</dbReference>
<dbReference type="InterPro" id="IPR005119">
    <property type="entry name" value="LysR_subst-bd"/>
</dbReference>
<dbReference type="InterPro" id="IPR000847">
    <property type="entry name" value="Tscrpt_reg_HTH_LysR"/>
</dbReference>
<dbReference type="InterPro" id="IPR036388">
    <property type="entry name" value="WH-like_DNA-bd_sf"/>
</dbReference>
<dbReference type="InterPro" id="IPR036390">
    <property type="entry name" value="WH_DNA-bd_sf"/>
</dbReference>
<dbReference type="PANTHER" id="PTHR30126">
    <property type="entry name" value="HTH-TYPE TRANSCRIPTIONAL REGULATOR"/>
    <property type="match status" value="1"/>
</dbReference>
<dbReference type="PANTHER" id="PTHR30126:SF39">
    <property type="entry name" value="HTH-TYPE TRANSCRIPTIONAL REGULATOR CYSL"/>
    <property type="match status" value="1"/>
</dbReference>
<dbReference type="Pfam" id="PF00126">
    <property type="entry name" value="HTH_1"/>
    <property type="match status" value="1"/>
</dbReference>
<dbReference type="Pfam" id="PF03466">
    <property type="entry name" value="LysR_substrate"/>
    <property type="match status" value="1"/>
</dbReference>
<dbReference type="PRINTS" id="PR00039">
    <property type="entry name" value="HTHLYSR"/>
</dbReference>
<dbReference type="SUPFAM" id="SSF53850">
    <property type="entry name" value="Periplasmic binding protein-like II"/>
    <property type="match status" value="1"/>
</dbReference>
<dbReference type="SUPFAM" id="SSF46785">
    <property type="entry name" value="Winged helix' DNA-binding domain"/>
    <property type="match status" value="1"/>
</dbReference>
<dbReference type="PROSITE" id="PS50931">
    <property type="entry name" value="HTH_LYSR"/>
    <property type="match status" value="1"/>
</dbReference>
<organism>
    <name type="scientific">Trieres chinensis</name>
    <name type="common">Marine centric diatom</name>
    <name type="synonym">Odontella sinensis</name>
    <dbReference type="NCBI Taxonomy" id="1514140"/>
    <lineage>
        <taxon>Eukaryota</taxon>
        <taxon>Sar</taxon>
        <taxon>Stramenopiles</taxon>
        <taxon>Ochrophyta</taxon>
        <taxon>Bacillariophyta</taxon>
        <taxon>Mediophyceae</taxon>
        <taxon>Biddulphiophycidae</taxon>
        <taxon>Eupodiscales</taxon>
        <taxon>Parodontellaceae</taxon>
        <taxon>Trieres</taxon>
    </lineage>
</organism>